<organism>
    <name type="scientific">Buchnera aphidicola subsp. Schizaphis graminum (strain Sg)</name>
    <dbReference type="NCBI Taxonomy" id="198804"/>
    <lineage>
        <taxon>Bacteria</taxon>
        <taxon>Pseudomonadati</taxon>
        <taxon>Pseudomonadota</taxon>
        <taxon>Gammaproteobacteria</taxon>
        <taxon>Enterobacterales</taxon>
        <taxon>Erwiniaceae</taxon>
        <taxon>Buchnera</taxon>
    </lineage>
</organism>
<gene>
    <name type="primary">hisG</name>
    <name type="ordered locus">BUsg_092</name>
</gene>
<sequence>MFNTNRVRIAMQKTGRLSSESIKLLTCCGIKINLKQQKLIAFAENMPIDVMLVRDDDIPGLVMDGVVDLGIVGENVLQEELLHRISQNLENSYITLRRLDFGICRLSLAIPINTPYVDITSLKNFRIATSYPHLLKKYLDSKNIVFKSCMLNGSVEVAPRAGLADAICDLVSTGATLEANGLREVQVVFRSHACLICKTGNINFAKKEVINKLMTRIKGVIKARESKYIMLHAPVNKLEEVISLLHGAEKPTILKLAGDDHRVAMHMVSSETLFWETMEKLKSLGASSILVLPIEKMME</sequence>
<accession>Q9ZHE7</accession>
<protein>
    <recommendedName>
        <fullName>ATP phosphoribosyltransferase</fullName>
        <shortName>ATP-PRT</shortName>
        <shortName>ATP-PRTase</shortName>
        <ecNumber>2.4.2.17</ecNumber>
    </recommendedName>
</protein>
<proteinExistence type="inferred from homology"/>
<comment type="function">
    <text evidence="1">Catalyzes the condensation of ATP and 5-phosphoribose 1-diphosphate to form N'-(5'-phosphoribosyl)-ATP (PR-ATP). Has a crucial role in the pathway because the rate of histidine biosynthesis seems to be controlled primarily by regulation of HisG enzymatic activity (By similarity).</text>
</comment>
<comment type="catalytic activity">
    <reaction>
        <text>1-(5-phospho-beta-D-ribosyl)-ATP + diphosphate = 5-phospho-alpha-D-ribose 1-diphosphate + ATP</text>
        <dbReference type="Rhea" id="RHEA:18473"/>
        <dbReference type="ChEBI" id="CHEBI:30616"/>
        <dbReference type="ChEBI" id="CHEBI:33019"/>
        <dbReference type="ChEBI" id="CHEBI:58017"/>
        <dbReference type="ChEBI" id="CHEBI:73183"/>
        <dbReference type="EC" id="2.4.2.17"/>
    </reaction>
</comment>
<comment type="cofactor">
    <cofactor evidence="1">
        <name>Mg(2+)</name>
        <dbReference type="ChEBI" id="CHEBI:18420"/>
    </cofactor>
</comment>
<comment type="activity regulation">
    <text evidence="1">Feedback inhibited by histidine.</text>
</comment>
<comment type="pathway">
    <text>Amino-acid biosynthesis; L-histidine biosynthesis; L-histidine from 5-phospho-alpha-D-ribose 1-diphosphate: step 1/9.</text>
</comment>
<comment type="subunit">
    <text evidence="1">Equilibrium between an active dimeric form, an inactive hexameric form and higher aggregates. Interconversion between the various forms is largely reversible and is influenced by the natural substrates and inhibitors of the enzyme (By similarity).</text>
</comment>
<comment type="subcellular location">
    <subcellularLocation>
        <location evidence="1">Cytoplasm</location>
    </subcellularLocation>
</comment>
<comment type="similarity">
    <text evidence="2">Belongs to the ATP phosphoribosyltransferase family. Long subfamily.</text>
</comment>
<keyword id="KW-0028">Amino-acid biosynthesis</keyword>
<keyword id="KW-0067">ATP-binding</keyword>
<keyword id="KW-0963">Cytoplasm</keyword>
<keyword id="KW-0328">Glycosyltransferase</keyword>
<keyword id="KW-0368">Histidine biosynthesis</keyword>
<keyword id="KW-0460">Magnesium</keyword>
<keyword id="KW-0479">Metal-binding</keyword>
<keyword id="KW-0547">Nucleotide-binding</keyword>
<keyword id="KW-0808">Transferase</keyword>
<reference key="1">
    <citation type="journal article" date="1998" name="Curr. Microbiol.">
        <title>Buchnera aphidicola (Aphid endosymbiont) contains genes encoding enzymes of histidine biosynthesis.</title>
        <authorList>
            <person name="Clark M.A."/>
            <person name="Baumann L."/>
            <person name="Baumann P."/>
        </authorList>
    </citation>
    <scope>NUCLEOTIDE SEQUENCE [GENOMIC DNA]</scope>
</reference>
<reference key="2">
    <citation type="journal article" date="2002" name="Science">
        <title>50 million years of genomic stasis in endosymbiotic bacteria.</title>
        <authorList>
            <person name="Tamas I."/>
            <person name="Klasson L."/>
            <person name="Canbaeck B."/>
            <person name="Naeslund A.K."/>
            <person name="Eriksson A.-S."/>
            <person name="Wernegreen J.J."/>
            <person name="Sandstroem J.P."/>
            <person name="Moran N.A."/>
            <person name="Andersson S.G.E."/>
        </authorList>
    </citation>
    <scope>NUCLEOTIDE SEQUENCE [LARGE SCALE GENOMIC DNA]</scope>
    <source>
        <strain>Sg</strain>
    </source>
</reference>
<evidence type="ECO:0000250" key="1"/>
<evidence type="ECO:0000305" key="2"/>
<dbReference type="EC" id="2.4.2.17"/>
<dbReference type="EMBL" id="AF067228">
    <property type="protein sequence ID" value="AAC97354.1"/>
    <property type="molecule type" value="Genomic_DNA"/>
</dbReference>
<dbReference type="EMBL" id="AE013218">
    <property type="protein sequence ID" value="AAM67662.1"/>
    <property type="molecule type" value="Genomic_DNA"/>
</dbReference>
<dbReference type="RefSeq" id="WP_011053628.1">
    <property type="nucleotide sequence ID" value="NC_004061.1"/>
</dbReference>
<dbReference type="SMR" id="Q9ZHE7"/>
<dbReference type="STRING" id="198804.BUsg_092"/>
<dbReference type="GeneID" id="93003561"/>
<dbReference type="KEGG" id="bas:BUsg_092"/>
<dbReference type="eggNOG" id="COG0040">
    <property type="taxonomic scope" value="Bacteria"/>
</dbReference>
<dbReference type="HOGENOM" id="CLU_038115_1_0_6"/>
<dbReference type="UniPathway" id="UPA00031">
    <property type="reaction ID" value="UER00006"/>
</dbReference>
<dbReference type="Proteomes" id="UP000000416">
    <property type="component" value="Chromosome"/>
</dbReference>
<dbReference type="GO" id="GO:0005737">
    <property type="term" value="C:cytoplasm"/>
    <property type="evidence" value="ECO:0007669"/>
    <property type="project" value="UniProtKB-SubCell"/>
</dbReference>
<dbReference type="GO" id="GO:0005524">
    <property type="term" value="F:ATP binding"/>
    <property type="evidence" value="ECO:0007669"/>
    <property type="project" value="UniProtKB-KW"/>
</dbReference>
<dbReference type="GO" id="GO:0003879">
    <property type="term" value="F:ATP phosphoribosyltransferase activity"/>
    <property type="evidence" value="ECO:0007669"/>
    <property type="project" value="UniProtKB-UniRule"/>
</dbReference>
<dbReference type="GO" id="GO:0000287">
    <property type="term" value="F:magnesium ion binding"/>
    <property type="evidence" value="ECO:0007669"/>
    <property type="project" value="UniProtKB-UniRule"/>
</dbReference>
<dbReference type="GO" id="GO:0000105">
    <property type="term" value="P:L-histidine biosynthetic process"/>
    <property type="evidence" value="ECO:0007669"/>
    <property type="project" value="UniProtKB-UniRule"/>
</dbReference>
<dbReference type="FunFam" id="3.30.70.120:FF:000002">
    <property type="entry name" value="ATP phosphoribosyltransferase"/>
    <property type="match status" value="1"/>
</dbReference>
<dbReference type="FunFam" id="3.40.190.10:FF:000008">
    <property type="entry name" value="ATP phosphoribosyltransferase"/>
    <property type="match status" value="1"/>
</dbReference>
<dbReference type="Gene3D" id="3.30.70.120">
    <property type="match status" value="1"/>
</dbReference>
<dbReference type="Gene3D" id="3.40.190.10">
    <property type="entry name" value="Periplasmic binding protein-like II"/>
    <property type="match status" value="2"/>
</dbReference>
<dbReference type="HAMAP" id="MF_00079">
    <property type="entry name" value="HisG_Long"/>
    <property type="match status" value="1"/>
</dbReference>
<dbReference type="InterPro" id="IPR020621">
    <property type="entry name" value="ATP-PRT_HisG_long"/>
</dbReference>
<dbReference type="InterPro" id="IPR013820">
    <property type="entry name" value="ATP_PRibTrfase_cat"/>
</dbReference>
<dbReference type="InterPro" id="IPR018198">
    <property type="entry name" value="ATP_PRibTrfase_CS"/>
</dbReference>
<dbReference type="InterPro" id="IPR001348">
    <property type="entry name" value="ATP_PRibTrfase_HisG"/>
</dbReference>
<dbReference type="InterPro" id="IPR013115">
    <property type="entry name" value="HisG_C"/>
</dbReference>
<dbReference type="InterPro" id="IPR011322">
    <property type="entry name" value="N-reg_PII-like_a/b"/>
</dbReference>
<dbReference type="InterPro" id="IPR015867">
    <property type="entry name" value="N-reg_PII/ATP_PRibTrfase_C"/>
</dbReference>
<dbReference type="NCBIfam" id="TIGR00070">
    <property type="entry name" value="hisG"/>
    <property type="match status" value="1"/>
</dbReference>
<dbReference type="NCBIfam" id="TIGR03455">
    <property type="entry name" value="HisG_C-term"/>
    <property type="match status" value="1"/>
</dbReference>
<dbReference type="PANTHER" id="PTHR21403:SF8">
    <property type="entry name" value="ATP PHOSPHORIBOSYLTRANSFERASE"/>
    <property type="match status" value="1"/>
</dbReference>
<dbReference type="PANTHER" id="PTHR21403">
    <property type="entry name" value="ATP PHOSPHORIBOSYLTRANSFERASE ATP-PRTASE"/>
    <property type="match status" value="1"/>
</dbReference>
<dbReference type="Pfam" id="PF01634">
    <property type="entry name" value="HisG"/>
    <property type="match status" value="1"/>
</dbReference>
<dbReference type="Pfam" id="PF08029">
    <property type="entry name" value="HisG_C"/>
    <property type="match status" value="1"/>
</dbReference>
<dbReference type="SUPFAM" id="SSF54913">
    <property type="entry name" value="GlnB-like"/>
    <property type="match status" value="1"/>
</dbReference>
<dbReference type="SUPFAM" id="SSF53850">
    <property type="entry name" value="Periplasmic binding protein-like II"/>
    <property type="match status" value="1"/>
</dbReference>
<dbReference type="PROSITE" id="PS01316">
    <property type="entry name" value="ATP_P_PHORIBOSYLTR"/>
    <property type="match status" value="1"/>
</dbReference>
<name>HIS1_BUCAP</name>
<feature type="chain" id="PRO_0000151834" description="ATP phosphoribosyltransferase">
    <location>
        <begin position="1"/>
        <end position="299"/>
    </location>
</feature>
<feature type="sequence conflict" description="In Ref. 1." evidence="2" ref="1">
    <original>NIV</original>
    <variation>TL</variation>
    <location>
        <begin position="143"/>
        <end position="145"/>
    </location>
</feature>
<feature type="sequence conflict" description="In Ref. 1." evidence="2" ref="1">
    <original>KS</original>
    <variation>QV</variation>
    <location>
        <begin position="147"/>
        <end position="148"/>
    </location>
</feature>